<dbReference type="EMBL" id="D50617">
    <property type="status" value="NOT_ANNOTATED_CDS"/>
    <property type="molecule type" value="Genomic_DNA"/>
</dbReference>
<dbReference type="EMBL" id="BK006940">
    <property type="status" value="NOT_ANNOTATED_CDS"/>
    <property type="molecule type" value="Genomic_DNA"/>
</dbReference>
<dbReference type="SMR" id="P0C5N0"/>
<dbReference type="STRING" id="4932.YFR010W-A"/>
<dbReference type="iPTMnet" id="P0C5N0"/>
<dbReference type="PaxDb" id="4932-YFR010W-A"/>
<dbReference type="EnsemblFungi" id="YFR010W-A_mRNA">
    <property type="protein sequence ID" value="YFR010W-A"/>
    <property type="gene ID" value="YFR010W-A"/>
</dbReference>
<dbReference type="AGR" id="SGD:S000028824"/>
<dbReference type="SGD" id="S000028824">
    <property type="gene designation" value="YFR010W-A"/>
</dbReference>
<dbReference type="HOGENOM" id="CLU_2905443_0_0_1"/>
<dbReference type="InParanoid" id="P0C5N0"/>
<dbReference type="PRO" id="PR:P0C5N0"/>
<dbReference type="Proteomes" id="UP000002311">
    <property type="component" value="Chromosome VI"/>
</dbReference>
<dbReference type="RNAct" id="P0C5N0">
    <property type="molecule type" value="protein"/>
</dbReference>
<dbReference type="GO" id="GO:0016020">
    <property type="term" value="C:membrane"/>
    <property type="evidence" value="ECO:0007669"/>
    <property type="project" value="UniProtKB-SubCell"/>
</dbReference>
<sequence>MYTFSYSTHNELLEFFHLFVTIQWLALIGQKTLSQFCLYRNAAVVGFFIRFTFGTPIFLQLL</sequence>
<feature type="chain" id="PRO_0000309028" description="Uncharacterized protein YFR010W-A">
    <location>
        <begin position="1"/>
        <end position="62"/>
    </location>
</feature>
<feature type="transmembrane region" description="Helical" evidence="1">
    <location>
        <begin position="9"/>
        <end position="29"/>
    </location>
</feature>
<feature type="transmembrane region" description="Helical" evidence="1">
    <location>
        <begin position="42"/>
        <end position="62"/>
    </location>
</feature>
<reference key="1">
    <citation type="journal article" date="1995" name="Nat. Genet.">
        <title>Analysis of the nucleotide sequence of chromosome VI from Saccharomyces cerevisiae.</title>
        <authorList>
            <person name="Murakami Y."/>
            <person name="Naitou M."/>
            <person name="Hagiwara H."/>
            <person name="Shibata T."/>
            <person name="Ozawa M."/>
            <person name="Sasanuma S."/>
            <person name="Sasanuma M."/>
            <person name="Tsuchiya Y."/>
            <person name="Soeda E."/>
            <person name="Yokoyama K."/>
            <person name="Yamazaki M."/>
            <person name="Tashiro H."/>
            <person name="Eki T."/>
        </authorList>
    </citation>
    <scope>NUCLEOTIDE SEQUENCE [LARGE SCALE GENOMIC DNA]</scope>
    <source>
        <strain>ATCC 204508 / S288c</strain>
    </source>
</reference>
<reference key="2">
    <citation type="journal article" date="2014" name="G3 (Bethesda)">
        <title>The reference genome sequence of Saccharomyces cerevisiae: Then and now.</title>
        <authorList>
            <person name="Engel S.R."/>
            <person name="Dietrich F.S."/>
            <person name="Fisk D.G."/>
            <person name="Binkley G."/>
            <person name="Balakrishnan R."/>
            <person name="Costanzo M.C."/>
            <person name="Dwight S.S."/>
            <person name="Hitz B.C."/>
            <person name="Karra K."/>
            <person name="Nash R.S."/>
            <person name="Weng S."/>
            <person name="Wong E.D."/>
            <person name="Lloyd P."/>
            <person name="Skrzypek M.S."/>
            <person name="Miyasato S.R."/>
            <person name="Simison M."/>
            <person name="Cherry J.M."/>
        </authorList>
    </citation>
    <scope>GENOME REANNOTATION</scope>
    <source>
        <strain>ATCC 204508 / S288c</strain>
    </source>
</reference>
<reference key="3">
    <citation type="journal article" date="2002" name="Genome Res.">
        <title>Parallel identification of new genes in Saccharomyces cerevisiae.</title>
        <authorList>
            <person name="Oshiro G."/>
            <person name="Wodicka L.M."/>
            <person name="Washburn M.P."/>
            <person name="Yates J.R. III"/>
            <person name="Lockhart D.J."/>
            <person name="Winzeler E.A."/>
        </authorList>
    </citation>
    <scope>IDENTIFICATION BY MASS SPECTROMETRY</scope>
</reference>
<accession>P0C5N0</accession>
<keyword id="KW-0472">Membrane</keyword>
<keyword id="KW-1185">Reference proteome</keyword>
<keyword id="KW-0812">Transmembrane</keyword>
<keyword id="KW-1133">Transmembrane helix</keyword>
<comment type="subcellular location">
    <subcellularLocation>
        <location evidence="2">Membrane</location>
        <topology evidence="2">Multi-pass membrane protein</topology>
    </subcellularLocation>
</comment>
<gene>
    <name type="ordered locus">YFR010W-A</name>
</gene>
<protein>
    <recommendedName>
        <fullName>Uncharacterized protein YFR010W-A</fullName>
    </recommendedName>
</protein>
<proteinExistence type="evidence at protein level"/>
<organism>
    <name type="scientific">Saccharomyces cerevisiae (strain ATCC 204508 / S288c)</name>
    <name type="common">Baker's yeast</name>
    <dbReference type="NCBI Taxonomy" id="559292"/>
    <lineage>
        <taxon>Eukaryota</taxon>
        <taxon>Fungi</taxon>
        <taxon>Dikarya</taxon>
        <taxon>Ascomycota</taxon>
        <taxon>Saccharomycotina</taxon>
        <taxon>Saccharomycetes</taxon>
        <taxon>Saccharomycetales</taxon>
        <taxon>Saccharomycetaceae</taxon>
        <taxon>Saccharomyces</taxon>
    </lineage>
</organism>
<name>YF010_YEAST</name>
<evidence type="ECO:0000255" key="1"/>
<evidence type="ECO:0000305" key="2"/>